<accession>A5FML2</accession>
<keyword id="KW-0963">Cytoplasm</keyword>
<keyword id="KW-0342">GTP-binding</keyword>
<keyword id="KW-0378">Hydrolase</keyword>
<keyword id="KW-0479">Metal-binding</keyword>
<keyword id="KW-0547">Nucleotide-binding</keyword>
<keyword id="KW-0690">Ribosome biogenesis</keyword>
<keyword id="KW-0694">RNA-binding</keyword>
<keyword id="KW-0699">rRNA-binding</keyword>
<keyword id="KW-0862">Zinc</keyword>
<comment type="function">
    <text evidence="1">One of several proteins that assist in the late maturation steps of the functional core of the 30S ribosomal subunit. Helps release RbfA from mature subunits. May play a role in the assembly of ribosomal proteins into the subunit. Circularly permuted GTPase that catalyzes slow GTP hydrolysis, GTPase activity is stimulated by the 30S ribosomal subunit.</text>
</comment>
<comment type="cofactor">
    <cofactor evidence="1">
        <name>Zn(2+)</name>
        <dbReference type="ChEBI" id="CHEBI:29105"/>
    </cofactor>
    <text evidence="1">Binds 1 zinc ion per subunit.</text>
</comment>
<comment type="subunit">
    <text evidence="1">Monomer. Associates with 30S ribosomal subunit, binds 16S rRNA.</text>
</comment>
<comment type="subcellular location">
    <subcellularLocation>
        <location evidence="1">Cytoplasm</location>
    </subcellularLocation>
</comment>
<comment type="similarity">
    <text evidence="1">Belongs to the TRAFAC class YlqF/YawG GTPase family. RsgA subfamily.</text>
</comment>
<sequence length="325" mass="36807">MTGTVYKSTGSWYTVKSEKGDFVECRMKGKFRIKGIKSTNPIAVGDIVDYELDETSDAVTGTIHTIHERKNYIVRKSVNLSKQIHIIASNIDQVFLLVTIDNPPTTTSFIDRFLVTAEAYGIEAILIFNKIDTLNEQTLDDQLYLQHIYTEIGYKCLRISSTENKGVDKLKEMMVGKVSMFSGHSGVGKSTLVNAMEPSLHLKTSVISEQSKQGQHTTTFAEMYDLSFDARIIDTPGIKGFGIVDMEPTEISGYFPEFFKLKDQCKFNNCLHKEEPHCAIKAALEKDEIAWSRYNSYLKILEGDEEHYRTDIYGEDRAASDETRK</sequence>
<feature type="chain" id="PRO_1000188077" description="Small ribosomal subunit biogenesis GTPase RsgA">
    <location>
        <begin position="1"/>
        <end position="325"/>
    </location>
</feature>
<feature type="domain" description="CP-type G" evidence="2">
    <location>
        <begin position="80"/>
        <end position="241"/>
    </location>
</feature>
<feature type="binding site" evidence="1">
    <location>
        <begin position="129"/>
        <end position="132"/>
    </location>
    <ligand>
        <name>GTP</name>
        <dbReference type="ChEBI" id="CHEBI:37565"/>
    </ligand>
</feature>
<feature type="binding site" evidence="1">
    <location>
        <begin position="183"/>
        <end position="191"/>
    </location>
    <ligand>
        <name>GTP</name>
        <dbReference type="ChEBI" id="CHEBI:37565"/>
    </ligand>
</feature>
<feature type="binding site" evidence="1">
    <location>
        <position position="265"/>
    </location>
    <ligand>
        <name>Zn(2+)</name>
        <dbReference type="ChEBI" id="CHEBI:29105"/>
    </ligand>
</feature>
<feature type="binding site" evidence="1">
    <location>
        <position position="270"/>
    </location>
    <ligand>
        <name>Zn(2+)</name>
        <dbReference type="ChEBI" id="CHEBI:29105"/>
    </ligand>
</feature>
<feature type="binding site" evidence="1">
    <location>
        <position position="272"/>
    </location>
    <ligand>
        <name>Zn(2+)</name>
        <dbReference type="ChEBI" id="CHEBI:29105"/>
    </ligand>
</feature>
<feature type="binding site" evidence="1">
    <location>
        <position position="278"/>
    </location>
    <ligand>
        <name>Zn(2+)</name>
        <dbReference type="ChEBI" id="CHEBI:29105"/>
    </ligand>
</feature>
<organism>
    <name type="scientific">Flavobacterium johnsoniae (strain ATCC 17061 / DSM 2064 / JCM 8514 / BCRC 14874 / CCUG 350202 / NBRC 14942 / NCIMB 11054 / UW101)</name>
    <name type="common">Cytophaga johnsonae</name>
    <dbReference type="NCBI Taxonomy" id="376686"/>
    <lineage>
        <taxon>Bacteria</taxon>
        <taxon>Pseudomonadati</taxon>
        <taxon>Bacteroidota</taxon>
        <taxon>Flavobacteriia</taxon>
        <taxon>Flavobacteriales</taxon>
        <taxon>Flavobacteriaceae</taxon>
        <taxon>Flavobacterium</taxon>
    </lineage>
</organism>
<evidence type="ECO:0000255" key="1">
    <source>
        <dbReference type="HAMAP-Rule" id="MF_01820"/>
    </source>
</evidence>
<evidence type="ECO:0000255" key="2">
    <source>
        <dbReference type="PROSITE-ProRule" id="PRU01058"/>
    </source>
</evidence>
<dbReference type="EC" id="3.6.1.-" evidence="1"/>
<dbReference type="EMBL" id="CP000685">
    <property type="protein sequence ID" value="ABQ03548.1"/>
    <property type="molecule type" value="Genomic_DNA"/>
</dbReference>
<dbReference type="RefSeq" id="WP_012022604.1">
    <property type="nucleotide sequence ID" value="NC_009441.1"/>
</dbReference>
<dbReference type="SMR" id="A5FML2"/>
<dbReference type="STRING" id="376686.Fjoh_0513"/>
<dbReference type="KEGG" id="fjo:Fjoh_0513"/>
<dbReference type="eggNOG" id="COG1162">
    <property type="taxonomic scope" value="Bacteria"/>
</dbReference>
<dbReference type="HOGENOM" id="CLU_033617_2_0_10"/>
<dbReference type="OrthoDB" id="9809485at2"/>
<dbReference type="Proteomes" id="UP000006694">
    <property type="component" value="Chromosome"/>
</dbReference>
<dbReference type="GO" id="GO:0005737">
    <property type="term" value="C:cytoplasm"/>
    <property type="evidence" value="ECO:0007669"/>
    <property type="project" value="UniProtKB-SubCell"/>
</dbReference>
<dbReference type="GO" id="GO:0005525">
    <property type="term" value="F:GTP binding"/>
    <property type="evidence" value="ECO:0007669"/>
    <property type="project" value="UniProtKB-UniRule"/>
</dbReference>
<dbReference type="GO" id="GO:0003924">
    <property type="term" value="F:GTPase activity"/>
    <property type="evidence" value="ECO:0007669"/>
    <property type="project" value="UniProtKB-UniRule"/>
</dbReference>
<dbReference type="GO" id="GO:0046872">
    <property type="term" value="F:metal ion binding"/>
    <property type="evidence" value="ECO:0007669"/>
    <property type="project" value="UniProtKB-KW"/>
</dbReference>
<dbReference type="GO" id="GO:0019843">
    <property type="term" value="F:rRNA binding"/>
    <property type="evidence" value="ECO:0007669"/>
    <property type="project" value="UniProtKB-KW"/>
</dbReference>
<dbReference type="GO" id="GO:0042274">
    <property type="term" value="P:ribosomal small subunit biogenesis"/>
    <property type="evidence" value="ECO:0007669"/>
    <property type="project" value="UniProtKB-UniRule"/>
</dbReference>
<dbReference type="CDD" id="cd04466">
    <property type="entry name" value="S1_YloQ_GTPase"/>
    <property type="match status" value="1"/>
</dbReference>
<dbReference type="CDD" id="cd01854">
    <property type="entry name" value="YjeQ_EngC"/>
    <property type="match status" value="1"/>
</dbReference>
<dbReference type="Gene3D" id="2.40.50.140">
    <property type="entry name" value="Nucleic acid-binding proteins"/>
    <property type="match status" value="1"/>
</dbReference>
<dbReference type="Gene3D" id="3.40.50.300">
    <property type="entry name" value="P-loop containing nucleotide triphosphate hydrolases"/>
    <property type="match status" value="1"/>
</dbReference>
<dbReference type="Gene3D" id="1.10.40.50">
    <property type="entry name" value="Probable gtpase engc, domain 3"/>
    <property type="match status" value="1"/>
</dbReference>
<dbReference type="HAMAP" id="MF_01820">
    <property type="entry name" value="GTPase_RsgA"/>
    <property type="match status" value="1"/>
</dbReference>
<dbReference type="InterPro" id="IPR030378">
    <property type="entry name" value="G_CP_dom"/>
</dbReference>
<dbReference type="InterPro" id="IPR012340">
    <property type="entry name" value="NA-bd_OB-fold"/>
</dbReference>
<dbReference type="InterPro" id="IPR027417">
    <property type="entry name" value="P-loop_NTPase"/>
</dbReference>
<dbReference type="InterPro" id="IPR004881">
    <property type="entry name" value="Ribosome_biogen_GTPase_RsgA"/>
</dbReference>
<dbReference type="InterPro" id="IPR010914">
    <property type="entry name" value="RsgA_GTPase_dom"/>
</dbReference>
<dbReference type="InterPro" id="IPR031944">
    <property type="entry name" value="RsgA_N"/>
</dbReference>
<dbReference type="NCBIfam" id="TIGR00157">
    <property type="entry name" value="ribosome small subunit-dependent GTPase A"/>
    <property type="match status" value="1"/>
</dbReference>
<dbReference type="PANTHER" id="PTHR32120">
    <property type="entry name" value="SMALL RIBOSOMAL SUBUNIT BIOGENESIS GTPASE RSGA"/>
    <property type="match status" value="1"/>
</dbReference>
<dbReference type="PANTHER" id="PTHR32120:SF11">
    <property type="entry name" value="SMALL RIBOSOMAL SUBUNIT BIOGENESIS GTPASE RSGA 1, MITOCHONDRIAL-RELATED"/>
    <property type="match status" value="1"/>
</dbReference>
<dbReference type="Pfam" id="PF03193">
    <property type="entry name" value="RsgA_GTPase"/>
    <property type="match status" value="1"/>
</dbReference>
<dbReference type="Pfam" id="PF16745">
    <property type="entry name" value="RsgA_N"/>
    <property type="match status" value="1"/>
</dbReference>
<dbReference type="SUPFAM" id="SSF50249">
    <property type="entry name" value="Nucleic acid-binding proteins"/>
    <property type="match status" value="1"/>
</dbReference>
<dbReference type="SUPFAM" id="SSF52540">
    <property type="entry name" value="P-loop containing nucleoside triphosphate hydrolases"/>
    <property type="match status" value="1"/>
</dbReference>
<dbReference type="PROSITE" id="PS50936">
    <property type="entry name" value="ENGC_GTPASE"/>
    <property type="match status" value="1"/>
</dbReference>
<dbReference type="PROSITE" id="PS51721">
    <property type="entry name" value="G_CP"/>
    <property type="match status" value="1"/>
</dbReference>
<proteinExistence type="inferred from homology"/>
<protein>
    <recommendedName>
        <fullName evidence="1">Small ribosomal subunit biogenesis GTPase RsgA</fullName>
        <ecNumber evidence="1">3.6.1.-</ecNumber>
    </recommendedName>
</protein>
<gene>
    <name evidence="1" type="primary">rsgA</name>
    <name type="ordered locus">Fjoh_0513</name>
</gene>
<name>RSGA_FLAJ1</name>
<reference key="1">
    <citation type="journal article" date="2009" name="Appl. Environ. Microbiol.">
        <title>Novel features of the polysaccharide-digesting gliding bacterium Flavobacterium johnsoniae as revealed by genome sequence analysis.</title>
        <authorList>
            <person name="McBride M.J."/>
            <person name="Xie G."/>
            <person name="Martens E.C."/>
            <person name="Lapidus A."/>
            <person name="Henrissat B."/>
            <person name="Rhodes R.G."/>
            <person name="Goltsman E."/>
            <person name="Wang W."/>
            <person name="Xu J."/>
            <person name="Hunnicutt D.W."/>
            <person name="Staroscik A.M."/>
            <person name="Hoover T.R."/>
            <person name="Cheng Y.Q."/>
            <person name="Stein J.L."/>
        </authorList>
    </citation>
    <scope>NUCLEOTIDE SEQUENCE [LARGE SCALE GENOMIC DNA]</scope>
    <source>
        <strain>ATCC 17061 / DSM 2064 / JCM 8514 / BCRC 14874 / CCUG 350202 / NBRC 14942 / NCIMB 11054 / UW101</strain>
    </source>
</reference>